<evidence type="ECO:0000250" key="1"/>
<evidence type="ECO:0000255" key="2">
    <source>
        <dbReference type="HAMAP-Rule" id="MF_01320"/>
    </source>
</evidence>
<evidence type="ECO:0000256" key="3">
    <source>
        <dbReference type="SAM" id="MobiDB-lite"/>
    </source>
</evidence>
<evidence type="ECO:0000305" key="4"/>
<gene>
    <name type="primary">rpl2</name>
</gene>
<geneLocation type="chloroplast"/>
<organism>
    <name type="scientific">Euglena gracilis</name>
    <dbReference type="NCBI Taxonomy" id="3039"/>
    <lineage>
        <taxon>Eukaryota</taxon>
        <taxon>Discoba</taxon>
        <taxon>Euglenozoa</taxon>
        <taxon>Euglenida</taxon>
        <taxon>Spirocuta</taxon>
        <taxon>Euglenophyceae</taxon>
        <taxon>Euglenales</taxon>
        <taxon>Euglenaceae</taxon>
        <taxon>Euglena</taxon>
    </lineage>
</organism>
<feature type="chain" id="PRO_0000129675" description="Large ribosomal subunit protein uL2c">
    <location>
        <begin position="1"/>
        <end position="277"/>
    </location>
</feature>
<feature type="region of interest" description="Disordered" evidence="3">
    <location>
        <begin position="225"/>
        <end position="277"/>
    </location>
</feature>
<feature type="compositionally biased region" description="Basic residues" evidence="3">
    <location>
        <begin position="255"/>
        <end position="277"/>
    </location>
</feature>
<protein>
    <recommendedName>
        <fullName evidence="2">Large ribosomal subunit protein uL2c</fullName>
    </recommendedName>
    <alternativeName>
        <fullName evidence="4">50S ribosomal protein L2, chloroplastic</fullName>
    </alternativeName>
</protein>
<accession>P19165</accession>
<sequence length="277" mass="31065">MIIRYYKPYTSGTRKRSVSNFSEITKSNPEKYLTFFVHRSKGRNSRGVITCRTLGGGHKRLYRRIEFKRNKLGILGKVISIEYDPNRNARIALIYYKNGDKSYIIHPFDLCVGNNIISDFFSPIKIGNSLPISKIPLGTIIHNVEFEPGKGGQIARAAGTFVQILANEGKFVTITMPSGEVRLLRRYCWATIGQVGNLDHSNVVLGKAGRNRWLGNKPTVRGVAMNPCDHPHGGGEGRSPIGRPKPVTPWGKPALGKKTRSPKRFSNKYIIRSRKMV</sequence>
<proteinExistence type="inferred from homology"/>
<name>RK2_EUGGR</name>
<comment type="subunit">
    <text evidence="1">Part of the 50S ribosomal subunit.</text>
</comment>
<comment type="subcellular location">
    <subcellularLocation>
        <location>Plastid</location>
        <location>Chloroplast</location>
    </subcellularLocation>
</comment>
<comment type="similarity">
    <text evidence="4">Belongs to the universal ribosomal protein uL2 family.</text>
</comment>
<reference key="1">
    <citation type="journal article" date="1988" name="Curr. Genet.">
        <title>Organization of ribosomal protein genes rpl23, rpl2, rps19, rpl22 and rps3 on the Euglena gracilis chloroplast genome.</title>
        <authorList>
            <person name="Christopher D.A."/>
            <person name="Cushman J.C."/>
            <person name="Price C.A."/>
            <person name="Hallick R.B."/>
        </authorList>
    </citation>
    <scope>NUCLEOTIDE SEQUENCE [GENOMIC DNA]</scope>
    <source>
        <strain>Z / UTEX 753</strain>
    </source>
</reference>
<reference key="2">
    <citation type="journal article" date="1993" name="Nucleic Acids Res.">
        <title>Complete sequence of Euglena gracilis chloroplast DNA.</title>
        <authorList>
            <person name="Hallick R.B."/>
            <person name="Hong L."/>
            <person name="Drager R.G."/>
            <person name="Favreau M.R."/>
            <person name="Monfort A."/>
            <person name="Orsat B."/>
            <person name="Spielmann A."/>
            <person name="Stutz E."/>
        </authorList>
    </citation>
    <scope>NUCLEOTIDE SEQUENCE [LARGE SCALE GENOMIC DNA]</scope>
    <source>
        <strain>Z / UTEX 753</strain>
    </source>
</reference>
<keyword id="KW-0150">Chloroplast</keyword>
<keyword id="KW-0934">Plastid</keyword>
<keyword id="KW-0687">Ribonucleoprotein</keyword>
<keyword id="KW-0689">Ribosomal protein</keyword>
<dbReference type="EMBL" id="Z11874">
    <property type="protein sequence ID" value="CAA77917.1"/>
    <property type="molecule type" value="Genomic_DNA"/>
</dbReference>
<dbReference type="EMBL" id="M37463">
    <property type="protein sequence ID" value="AAA84224.1"/>
    <property type="molecule type" value="Genomic_DNA"/>
</dbReference>
<dbReference type="EMBL" id="X70810">
    <property type="protein sequence ID" value="CAA50100.1"/>
    <property type="molecule type" value="Genomic_DNA"/>
</dbReference>
<dbReference type="PIR" id="S26081">
    <property type="entry name" value="S26081"/>
</dbReference>
<dbReference type="RefSeq" id="NP_041913.1">
    <property type="nucleotide sequence ID" value="NC_001603.2"/>
</dbReference>
<dbReference type="SMR" id="P19165"/>
<dbReference type="GeneID" id="807531"/>
<dbReference type="GO" id="GO:0009507">
    <property type="term" value="C:chloroplast"/>
    <property type="evidence" value="ECO:0007669"/>
    <property type="project" value="UniProtKB-SubCell"/>
</dbReference>
<dbReference type="GO" id="GO:0005762">
    <property type="term" value="C:mitochondrial large ribosomal subunit"/>
    <property type="evidence" value="ECO:0007669"/>
    <property type="project" value="TreeGrafter"/>
</dbReference>
<dbReference type="GO" id="GO:0019843">
    <property type="term" value="F:rRNA binding"/>
    <property type="evidence" value="ECO:0007669"/>
    <property type="project" value="UniProtKB-UniRule"/>
</dbReference>
<dbReference type="GO" id="GO:0003735">
    <property type="term" value="F:structural constituent of ribosome"/>
    <property type="evidence" value="ECO:0007669"/>
    <property type="project" value="InterPro"/>
</dbReference>
<dbReference type="GO" id="GO:0016740">
    <property type="term" value="F:transferase activity"/>
    <property type="evidence" value="ECO:0007669"/>
    <property type="project" value="InterPro"/>
</dbReference>
<dbReference type="GO" id="GO:0032543">
    <property type="term" value="P:mitochondrial translation"/>
    <property type="evidence" value="ECO:0007669"/>
    <property type="project" value="TreeGrafter"/>
</dbReference>
<dbReference type="FunFam" id="2.30.30.30:FF:000001">
    <property type="entry name" value="50S ribosomal protein L2"/>
    <property type="match status" value="1"/>
</dbReference>
<dbReference type="FunFam" id="4.10.950.10:FF:000001">
    <property type="entry name" value="50S ribosomal protein L2"/>
    <property type="match status" value="1"/>
</dbReference>
<dbReference type="Gene3D" id="2.30.30.30">
    <property type="match status" value="1"/>
</dbReference>
<dbReference type="Gene3D" id="2.40.50.140">
    <property type="entry name" value="Nucleic acid-binding proteins"/>
    <property type="match status" value="1"/>
</dbReference>
<dbReference type="Gene3D" id="4.10.950.10">
    <property type="entry name" value="Ribosomal protein L2, domain 3"/>
    <property type="match status" value="1"/>
</dbReference>
<dbReference type="HAMAP" id="MF_01320_B">
    <property type="entry name" value="Ribosomal_uL2_B"/>
    <property type="match status" value="1"/>
</dbReference>
<dbReference type="InterPro" id="IPR012340">
    <property type="entry name" value="NA-bd_OB-fold"/>
</dbReference>
<dbReference type="InterPro" id="IPR014722">
    <property type="entry name" value="Rib_uL2_dom2"/>
</dbReference>
<dbReference type="InterPro" id="IPR002171">
    <property type="entry name" value="Ribosomal_uL2"/>
</dbReference>
<dbReference type="InterPro" id="IPR005880">
    <property type="entry name" value="Ribosomal_uL2_bac/org-type"/>
</dbReference>
<dbReference type="InterPro" id="IPR022669">
    <property type="entry name" value="Ribosomal_uL2_C"/>
</dbReference>
<dbReference type="InterPro" id="IPR022671">
    <property type="entry name" value="Ribosomal_uL2_CS"/>
</dbReference>
<dbReference type="InterPro" id="IPR014726">
    <property type="entry name" value="Ribosomal_uL2_dom3"/>
</dbReference>
<dbReference type="InterPro" id="IPR022666">
    <property type="entry name" value="Ribosomal_uL2_RNA-bd_dom"/>
</dbReference>
<dbReference type="InterPro" id="IPR008991">
    <property type="entry name" value="Translation_prot_SH3-like_sf"/>
</dbReference>
<dbReference type="NCBIfam" id="TIGR01171">
    <property type="entry name" value="rplB_bact"/>
    <property type="match status" value="1"/>
</dbReference>
<dbReference type="PANTHER" id="PTHR13691:SF5">
    <property type="entry name" value="LARGE RIBOSOMAL SUBUNIT PROTEIN UL2M"/>
    <property type="match status" value="1"/>
</dbReference>
<dbReference type="PANTHER" id="PTHR13691">
    <property type="entry name" value="RIBOSOMAL PROTEIN L2"/>
    <property type="match status" value="1"/>
</dbReference>
<dbReference type="Pfam" id="PF00181">
    <property type="entry name" value="Ribosomal_L2"/>
    <property type="match status" value="1"/>
</dbReference>
<dbReference type="Pfam" id="PF03947">
    <property type="entry name" value="Ribosomal_L2_C"/>
    <property type="match status" value="1"/>
</dbReference>
<dbReference type="PIRSF" id="PIRSF002158">
    <property type="entry name" value="Ribosomal_L2"/>
    <property type="match status" value="1"/>
</dbReference>
<dbReference type="SMART" id="SM01383">
    <property type="entry name" value="Ribosomal_L2"/>
    <property type="match status" value="1"/>
</dbReference>
<dbReference type="SMART" id="SM01382">
    <property type="entry name" value="Ribosomal_L2_C"/>
    <property type="match status" value="1"/>
</dbReference>
<dbReference type="SUPFAM" id="SSF50249">
    <property type="entry name" value="Nucleic acid-binding proteins"/>
    <property type="match status" value="1"/>
</dbReference>
<dbReference type="SUPFAM" id="SSF50104">
    <property type="entry name" value="Translation proteins SH3-like domain"/>
    <property type="match status" value="1"/>
</dbReference>
<dbReference type="PROSITE" id="PS00467">
    <property type="entry name" value="RIBOSOMAL_L2"/>
    <property type="match status" value="1"/>
</dbReference>